<proteinExistence type="inferred from homology"/>
<protein>
    <recommendedName>
        <fullName evidence="1">Glutamate--tRNA ligase</fullName>
        <ecNumber evidence="1">6.1.1.17</ecNumber>
    </recommendedName>
    <alternativeName>
        <fullName evidence="1">Glutamyl-tRNA synthetase</fullName>
        <shortName evidence="1">GluRS</shortName>
    </alternativeName>
</protein>
<sequence length="502" mass="57811">MVGQRVRTRFAPSPTGYLHVGGLRTALYNYLFAKKMHGDFIIRIEDTDQTRKVEGAQQNLIKALEWAGIVADESPEKGGNYGPYVQSERLDLYGRYCQQLLDDQHAYYCFATHEELEENRQLQIKQGLQPKYNRKWLPEEMGGSMPPSVIRKKLDEGGPYVIRMKVPDYVSVWFEDIIRGPVEFDSATIDDQVLMKSDGFPTYHFASVIDDHLMEFTHIIRGEEWLSSMPKHLLLYEFFGWEPPKVAHLPLLLNADRSKLSKRQGDVAVEDYIRKGYSNDAIINFVAMLGWNEGEGSEQEVYSMEQLIEKFSLERVGKAGAVFNIDKLNWLEKQYIKNRPTEQLVPVIKPILLAELERKETMMPVDLITSEAYLEKVIELMRERVGFEHEFVTFSSYFFFEPDSYDEEAVKKRWAPDTNSLLQEFTEILATLEEFSAENIEAHLKEFVAPKGLKAAALIHPLRIVSSGVSFGPSLYHMLEVLGKETVLRRILKGREKITFSA</sequence>
<evidence type="ECO:0000255" key="1">
    <source>
        <dbReference type="HAMAP-Rule" id="MF_00022"/>
    </source>
</evidence>
<organism>
    <name type="scientific">Pelodictyon phaeoclathratiforme (strain DSM 5477 / BU-1)</name>
    <dbReference type="NCBI Taxonomy" id="324925"/>
    <lineage>
        <taxon>Bacteria</taxon>
        <taxon>Pseudomonadati</taxon>
        <taxon>Chlorobiota</taxon>
        <taxon>Chlorobiia</taxon>
        <taxon>Chlorobiales</taxon>
        <taxon>Chlorobiaceae</taxon>
        <taxon>Chlorobium/Pelodictyon group</taxon>
        <taxon>Pelodictyon</taxon>
    </lineage>
</organism>
<feature type="chain" id="PRO_0000367731" description="Glutamate--tRNA ligase">
    <location>
        <begin position="1"/>
        <end position="502"/>
    </location>
</feature>
<feature type="short sequence motif" description="'HIGH' region" evidence="1">
    <location>
        <begin position="12"/>
        <end position="22"/>
    </location>
</feature>
<feature type="short sequence motif" description="'KMSKS' region" evidence="1">
    <location>
        <begin position="259"/>
        <end position="263"/>
    </location>
</feature>
<feature type="binding site" evidence="1">
    <location>
        <position position="262"/>
    </location>
    <ligand>
        <name>ATP</name>
        <dbReference type="ChEBI" id="CHEBI:30616"/>
    </ligand>
</feature>
<comment type="function">
    <text evidence="1">Catalyzes the attachment of glutamate to tRNA(Glu) in a two-step reaction: glutamate is first activated by ATP to form Glu-AMP and then transferred to the acceptor end of tRNA(Glu).</text>
</comment>
<comment type="catalytic activity">
    <reaction evidence="1">
        <text>tRNA(Glu) + L-glutamate + ATP = L-glutamyl-tRNA(Glu) + AMP + diphosphate</text>
        <dbReference type="Rhea" id="RHEA:23540"/>
        <dbReference type="Rhea" id="RHEA-COMP:9663"/>
        <dbReference type="Rhea" id="RHEA-COMP:9680"/>
        <dbReference type="ChEBI" id="CHEBI:29985"/>
        <dbReference type="ChEBI" id="CHEBI:30616"/>
        <dbReference type="ChEBI" id="CHEBI:33019"/>
        <dbReference type="ChEBI" id="CHEBI:78442"/>
        <dbReference type="ChEBI" id="CHEBI:78520"/>
        <dbReference type="ChEBI" id="CHEBI:456215"/>
        <dbReference type="EC" id="6.1.1.17"/>
    </reaction>
</comment>
<comment type="subunit">
    <text evidence="1">Monomer.</text>
</comment>
<comment type="subcellular location">
    <subcellularLocation>
        <location evidence="1">Cytoplasm</location>
    </subcellularLocation>
</comment>
<comment type="similarity">
    <text evidence="1">Belongs to the class-I aminoacyl-tRNA synthetase family. Glutamate--tRNA ligase type 1 subfamily.</text>
</comment>
<dbReference type="EC" id="6.1.1.17" evidence="1"/>
<dbReference type="EMBL" id="CP001110">
    <property type="protein sequence ID" value="ACF42790.1"/>
    <property type="molecule type" value="Genomic_DNA"/>
</dbReference>
<dbReference type="RefSeq" id="WP_012507285.1">
    <property type="nucleotide sequence ID" value="NC_011060.1"/>
</dbReference>
<dbReference type="SMR" id="B4SCV6"/>
<dbReference type="STRING" id="324925.Ppha_0464"/>
<dbReference type="KEGG" id="pph:Ppha_0464"/>
<dbReference type="eggNOG" id="COG0008">
    <property type="taxonomic scope" value="Bacteria"/>
</dbReference>
<dbReference type="HOGENOM" id="CLU_015768_6_1_10"/>
<dbReference type="OrthoDB" id="9807503at2"/>
<dbReference type="Proteomes" id="UP000002724">
    <property type="component" value="Chromosome"/>
</dbReference>
<dbReference type="GO" id="GO:0005737">
    <property type="term" value="C:cytoplasm"/>
    <property type="evidence" value="ECO:0007669"/>
    <property type="project" value="UniProtKB-SubCell"/>
</dbReference>
<dbReference type="GO" id="GO:0005524">
    <property type="term" value="F:ATP binding"/>
    <property type="evidence" value="ECO:0007669"/>
    <property type="project" value="UniProtKB-UniRule"/>
</dbReference>
<dbReference type="GO" id="GO:0004818">
    <property type="term" value="F:glutamate-tRNA ligase activity"/>
    <property type="evidence" value="ECO:0007669"/>
    <property type="project" value="UniProtKB-UniRule"/>
</dbReference>
<dbReference type="GO" id="GO:0000049">
    <property type="term" value="F:tRNA binding"/>
    <property type="evidence" value="ECO:0007669"/>
    <property type="project" value="InterPro"/>
</dbReference>
<dbReference type="GO" id="GO:0008270">
    <property type="term" value="F:zinc ion binding"/>
    <property type="evidence" value="ECO:0007669"/>
    <property type="project" value="InterPro"/>
</dbReference>
<dbReference type="GO" id="GO:0006424">
    <property type="term" value="P:glutamyl-tRNA aminoacylation"/>
    <property type="evidence" value="ECO:0007669"/>
    <property type="project" value="UniProtKB-UniRule"/>
</dbReference>
<dbReference type="CDD" id="cd00808">
    <property type="entry name" value="GluRS_core"/>
    <property type="match status" value="1"/>
</dbReference>
<dbReference type="FunFam" id="3.40.50.620:FF:000045">
    <property type="entry name" value="Glutamate--tRNA ligase, mitochondrial"/>
    <property type="match status" value="1"/>
</dbReference>
<dbReference type="Gene3D" id="1.10.10.350">
    <property type="match status" value="1"/>
</dbReference>
<dbReference type="Gene3D" id="3.40.50.620">
    <property type="entry name" value="HUPs"/>
    <property type="match status" value="1"/>
</dbReference>
<dbReference type="HAMAP" id="MF_00022">
    <property type="entry name" value="Glu_tRNA_synth_type1"/>
    <property type="match status" value="1"/>
</dbReference>
<dbReference type="InterPro" id="IPR045462">
    <property type="entry name" value="aa-tRNA-synth_I_cd-bd"/>
</dbReference>
<dbReference type="InterPro" id="IPR020751">
    <property type="entry name" value="aa-tRNA-synth_I_codon-bd_sub2"/>
</dbReference>
<dbReference type="InterPro" id="IPR001412">
    <property type="entry name" value="aa-tRNA-synth_I_CS"/>
</dbReference>
<dbReference type="InterPro" id="IPR008925">
    <property type="entry name" value="aa_tRNA-synth_I_cd-bd_sf"/>
</dbReference>
<dbReference type="InterPro" id="IPR004527">
    <property type="entry name" value="Glu-tRNA-ligase_bac/mito"/>
</dbReference>
<dbReference type="InterPro" id="IPR000924">
    <property type="entry name" value="Glu/Gln-tRNA-synth"/>
</dbReference>
<dbReference type="InterPro" id="IPR020058">
    <property type="entry name" value="Glu/Gln-tRNA-synth_Ib_cat-dom"/>
</dbReference>
<dbReference type="InterPro" id="IPR049940">
    <property type="entry name" value="GluQ/Sye"/>
</dbReference>
<dbReference type="InterPro" id="IPR033910">
    <property type="entry name" value="GluRS_core"/>
</dbReference>
<dbReference type="InterPro" id="IPR014729">
    <property type="entry name" value="Rossmann-like_a/b/a_fold"/>
</dbReference>
<dbReference type="NCBIfam" id="TIGR00464">
    <property type="entry name" value="gltX_bact"/>
    <property type="match status" value="1"/>
</dbReference>
<dbReference type="PANTHER" id="PTHR43311">
    <property type="entry name" value="GLUTAMATE--TRNA LIGASE"/>
    <property type="match status" value="1"/>
</dbReference>
<dbReference type="PANTHER" id="PTHR43311:SF2">
    <property type="entry name" value="GLUTAMATE--TRNA LIGASE, MITOCHONDRIAL-RELATED"/>
    <property type="match status" value="1"/>
</dbReference>
<dbReference type="Pfam" id="PF19269">
    <property type="entry name" value="Anticodon_2"/>
    <property type="match status" value="1"/>
</dbReference>
<dbReference type="Pfam" id="PF00749">
    <property type="entry name" value="tRNA-synt_1c"/>
    <property type="match status" value="1"/>
</dbReference>
<dbReference type="PRINTS" id="PR00987">
    <property type="entry name" value="TRNASYNTHGLU"/>
</dbReference>
<dbReference type="SUPFAM" id="SSF48163">
    <property type="entry name" value="An anticodon-binding domain of class I aminoacyl-tRNA synthetases"/>
    <property type="match status" value="1"/>
</dbReference>
<dbReference type="SUPFAM" id="SSF52374">
    <property type="entry name" value="Nucleotidylyl transferase"/>
    <property type="match status" value="1"/>
</dbReference>
<dbReference type="PROSITE" id="PS00178">
    <property type="entry name" value="AA_TRNA_LIGASE_I"/>
    <property type="match status" value="1"/>
</dbReference>
<gene>
    <name evidence="1" type="primary">gltX</name>
    <name type="ordered locus">Ppha_0464</name>
</gene>
<keyword id="KW-0030">Aminoacyl-tRNA synthetase</keyword>
<keyword id="KW-0067">ATP-binding</keyword>
<keyword id="KW-0963">Cytoplasm</keyword>
<keyword id="KW-0436">Ligase</keyword>
<keyword id="KW-0547">Nucleotide-binding</keyword>
<keyword id="KW-0648">Protein biosynthesis</keyword>
<keyword id="KW-1185">Reference proteome</keyword>
<accession>B4SCV6</accession>
<reference key="1">
    <citation type="submission" date="2008-06" db="EMBL/GenBank/DDBJ databases">
        <title>Complete sequence of Pelodictyon phaeoclathratiforme BU-1.</title>
        <authorList>
            <consortium name="US DOE Joint Genome Institute"/>
            <person name="Lucas S."/>
            <person name="Copeland A."/>
            <person name="Lapidus A."/>
            <person name="Glavina del Rio T."/>
            <person name="Dalin E."/>
            <person name="Tice H."/>
            <person name="Bruce D."/>
            <person name="Goodwin L."/>
            <person name="Pitluck S."/>
            <person name="Schmutz J."/>
            <person name="Larimer F."/>
            <person name="Land M."/>
            <person name="Hauser L."/>
            <person name="Kyrpides N."/>
            <person name="Mikhailova N."/>
            <person name="Liu Z."/>
            <person name="Li T."/>
            <person name="Zhao F."/>
            <person name="Overmann J."/>
            <person name="Bryant D.A."/>
            <person name="Richardson P."/>
        </authorList>
    </citation>
    <scope>NUCLEOTIDE SEQUENCE [LARGE SCALE GENOMIC DNA]</scope>
    <source>
        <strain>DSM 5477 / BU-1</strain>
    </source>
</reference>
<name>SYE_PELPB</name>